<protein>
    <recommendedName>
        <fullName>Autophagy-related protein 3</fullName>
    </recommendedName>
    <alternativeName>
        <fullName>Autophagy-related E2-like conjugation enzyme ATG3</fullName>
    </alternativeName>
</protein>
<reference key="1">
    <citation type="journal article" date="2007" name="Proc. Natl. Acad. Sci. U.S.A.">
        <title>Independent sorting-out of thousands of duplicated gene pairs in two yeast species descended from a whole-genome duplication.</title>
        <authorList>
            <person name="Scannell D.R."/>
            <person name="Frank A.C."/>
            <person name="Conant G.C."/>
            <person name="Byrne K.P."/>
            <person name="Woolfit M."/>
            <person name="Wolfe K.H."/>
        </authorList>
    </citation>
    <scope>NUCLEOTIDE SEQUENCE [LARGE SCALE GENOMIC DNA]</scope>
    <source>
        <strain>ATCC 22028 / DSM 70294 / BCRC 21397 / CBS 2163 / NBRC 10782 / NRRL Y-8283 / UCD 57-17</strain>
    </source>
</reference>
<feature type="chain" id="PRO_0000317830" description="Autophagy-related protein 3">
    <location>
        <begin position="1"/>
        <end position="318"/>
    </location>
</feature>
<feature type="region of interest" description="Flexible region" evidence="1">
    <location>
        <begin position="83"/>
        <end position="164"/>
    </location>
</feature>
<feature type="region of interest" description="Disordered" evidence="2">
    <location>
        <begin position="122"/>
        <end position="142"/>
    </location>
</feature>
<feature type="region of interest" description="Handle region" evidence="1">
    <location>
        <begin position="242"/>
        <end position="293"/>
    </location>
</feature>
<feature type="region of interest" description="Disordered" evidence="2">
    <location>
        <begin position="260"/>
        <end position="279"/>
    </location>
</feature>
<feature type="compositionally biased region" description="Polar residues" evidence="2">
    <location>
        <begin position="122"/>
        <end position="137"/>
    </location>
</feature>
<feature type="compositionally biased region" description="Basic and acidic residues" evidence="2">
    <location>
        <begin position="260"/>
        <end position="273"/>
    </location>
</feature>
<feature type="active site" description="Glycyl thioester intermediate" evidence="1">
    <location>
        <position position="238"/>
    </location>
</feature>
<accession>A7TK16</accession>
<keyword id="KW-0072">Autophagy</keyword>
<keyword id="KW-0963">Cytoplasm</keyword>
<keyword id="KW-0653">Protein transport</keyword>
<keyword id="KW-1185">Reference proteome</keyword>
<keyword id="KW-0813">Transport</keyword>
<keyword id="KW-0833">Ubl conjugation pathway</keyword>
<organism>
    <name type="scientific">Vanderwaltozyma polyspora (strain ATCC 22028 / DSM 70294 / BCRC 21397 / CBS 2163 / NBRC 10782 / NRRL Y-8283 / UCD 57-17)</name>
    <name type="common">Kluyveromyces polysporus</name>
    <dbReference type="NCBI Taxonomy" id="436907"/>
    <lineage>
        <taxon>Eukaryota</taxon>
        <taxon>Fungi</taxon>
        <taxon>Dikarya</taxon>
        <taxon>Ascomycota</taxon>
        <taxon>Saccharomycotina</taxon>
        <taxon>Saccharomycetes</taxon>
        <taxon>Saccharomycetales</taxon>
        <taxon>Saccharomycetaceae</taxon>
        <taxon>Vanderwaltozyma</taxon>
    </lineage>
</organism>
<comment type="function">
    <text evidence="1">E2 conjugating enzyme required for the cytoplasm to vacuole transport (Cvt) and autophagy. Required for selective autophagic degradation of the nucleus (nucleophagy) as well as for mitophagy which contributes to regulate mitochondrial quantity and quality by eliminating the mitochondria to a basal level to fulfill cellular energy requirements and preventing excess ROS production. Responsible for the E2-like covalent binding of phosphatidylethanolamine to the C-terminal Gly of ATG8. The ATG12-ATG5 conjugate plays a role of an E3 and promotes the transfer of ATG8 from ATG3 to phosphatidylethanolamine (PE). This step is required for the membrane association of ATG8. The formation of the ATG8-phosphatidylethanolamine conjugate is essential for autophagy and for the cytoplasm to vacuole transport (Cvt). The ATG8-PE conjugate mediates tethering between adjacent membranes and stimulates membrane hemifusion, leading to expansion of the autophagosomal membrane during autophagy (By similarity).</text>
</comment>
<comment type="subunit">
    <text evidence="1">Monomer. Interacts with ATG8 through an intermediate thioester bond through the C-terminal Gly of ATG8. Also interacts with the 40 amino acid C-terminal region of the E1-like ATG7 enzyme. Also interacts with the ATG12-ATG5 conjugate.</text>
</comment>
<comment type="subcellular location">
    <subcellularLocation>
        <location evidence="1">Cytoplasm</location>
    </subcellularLocation>
</comment>
<comment type="domain">
    <text evidence="1">The N-terminal region is involved in phosphatidylethanolamine-binding and is required for ATG8-PE conjugation.</text>
</comment>
<comment type="domain">
    <text evidence="1">The flexible region (FR) is required for ATG7-binding.</text>
</comment>
<comment type="domain">
    <text evidence="1">The handle region (HR) contains the ATG8 interaction motif (AIM) and mediates binding to ATG8. It is crucial for the cytoplasm-to-vacuole targeting pathway (By similarity).</text>
</comment>
<comment type="similarity">
    <text evidence="3">Belongs to the ATG3 family.</text>
</comment>
<gene>
    <name type="primary">ATG3</name>
    <name type="ORF">Kpol_1060p18</name>
</gene>
<dbReference type="EMBL" id="DS480405">
    <property type="protein sequence ID" value="EDO17362.1"/>
    <property type="molecule type" value="Genomic_DNA"/>
</dbReference>
<dbReference type="RefSeq" id="XP_001645220.1">
    <property type="nucleotide sequence ID" value="XM_001645170.1"/>
</dbReference>
<dbReference type="SMR" id="A7TK16"/>
<dbReference type="FunCoup" id="A7TK16">
    <property type="interactions" value="1111"/>
</dbReference>
<dbReference type="STRING" id="436907.A7TK16"/>
<dbReference type="GeneID" id="5545579"/>
<dbReference type="KEGG" id="vpo:Kpol_1060p18"/>
<dbReference type="eggNOG" id="KOG2981">
    <property type="taxonomic scope" value="Eukaryota"/>
</dbReference>
<dbReference type="HOGENOM" id="CLU_027518_2_0_1"/>
<dbReference type="InParanoid" id="A7TK16"/>
<dbReference type="OMA" id="HCPTWSW"/>
<dbReference type="OrthoDB" id="1584384at2759"/>
<dbReference type="PhylomeDB" id="A7TK16"/>
<dbReference type="Proteomes" id="UP000000267">
    <property type="component" value="Unassembled WGS sequence"/>
</dbReference>
<dbReference type="GO" id="GO:0005829">
    <property type="term" value="C:cytosol"/>
    <property type="evidence" value="ECO:0007669"/>
    <property type="project" value="EnsemblFungi"/>
</dbReference>
<dbReference type="GO" id="GO:0005739">
    <property type="term" value="C:mitochondrion"/>
    <property type="evidence" value="ECO:0007669"/>
    <property type="project" value="EnsemblFungi"/>
</dbReference>
<dbReference type="GO" id="GO:0061908">
    <property type="term" value="C:phagophore"/>
    <property type="evidence" value="ECO:0007669"/>
    <property type="project" value="EnsemblFungi"/>
</dbReference>
<dbReference type="GO" id="GO:0000407">
    <property type="term" value="C:phagophore assembly site"/>
    <property type="evidence" value="ECO:0007669"/>
    <property type="project" value="EnsemblFungi"/>
</dbReference>
<dbReference type="GO" id="GO:0019776">
    <property type="term" value="F:Atg8-family ligase activity"/>
    <property type="evidence" value="ECO:0007669"/>
    <property type="project" value="EnsemblFungi"/>
</dbReference>
<dbReference type="GO" id="GO:0000045">
    <property type="term" value="P:autophagosome assembly"/>
    <property type="evidence" value="ECO:0007669"/>
    <property type="project" value="EnsemblFungi"/>
</dbReference>
<dbReference type="GO" id="GO:0000422">
    <property type="term" value="P:autophagy of mitochondrion"/>
    <property type="evidence" value="ECO:0007669"/>
    <property type="project" value="EnsemblFungi"/>
</dbReference>
<dbReference type="GO" id="GO:0032258">
    <property type="term" value="P:cytoplasm to vacuole targeting by the Cvt pathway"/>
    <property type="evidence" value="ECO:0007669"/>
    <property type="project" value="EnsemblFungi"/>
</dbReference>
<dbReference type="GO" id="GO:0061723">
    <property type="term" value="P:glycophagy"/>
    <property type="evidence" value="ECO:0007669"/>
    <property type="project" value="TreeGrafter"/>
</dbReference>
<dbReference type="GO" id="GO:0034727">
    <property type="term" value="P:piecemeal microautophagy of the nucleus"/>
    <property type="evidence" value="ECO:0007669"/>
    <property type="project" value="EnsemblFungi"/>
</dbReference>
<dbReference type="GO" id="GO:0006612">
    <property type="term" value="P:protein targeting to membrane"/>
    <property type="evidence" value="ECO:0007669"/>
    <property type="project" value="EnsemblFungi"/>
</dbReference>
<dbReference type="Gene3D" id="3.30.1460.50">
    <property type="match status" value="1"/>
</dbReference>
<dbReference type="InterPro" id="IPR007135">
    <property type="entry name" value="Atg3/Atg10"/>
</dbReference>
<dbReference type="PANTHER" id="PTHR12866">
    <property type="entry name" value="UBIQUITIN-LIKE-CONJUGATING ENZYME ATG3"/>
    <property type="match status" value="1"/>
</dbReference>
<dbReference type="PANTHER" id="PTHR12866:SF2">
    <property type="entry name" value="UBIQUITIN-LIKE-CONJUGATING ENZYME ATG3"/>
    <property type="match status" value="1"/>
</dbReference>
<dbReference type="Pfam" id="PF03987">
    <property type="entry name" value="Autophagy_act_C"/>
    <property type="match status" value="1"/>
</dbReference>
<name>ATG3_VANPO</name>
<sequence length="318" mass="36469">MLRSTLSSWREYLTPVSHKSTFLSSGQITPDEFVQAGDYLCHMFPTWEWNKAGNDVLFRNFLPEDKQFLVMRKVPCNVRAKQFVNIDDSASEAFVQGINDEDGSIENGWMIGGGETDHLSKHSLSSGDVTPSGNNTKTMDETTPDIDDLMESMGIEDTDDIIDTPQNTDRRYYDLYITYSTSYKVPKMYIVGFNGSGSPLTPEEMFEDIAPDYRSKTATIEKLPFYKNTISSVSIHPCKHANVMRILLDKVLVVKRRRREEMSENHNEHKPNPESDEWEDLQNDVDDTIRADQYLIIFLKFITSVTPGIEHDYTMEGW</sequence>
<proteinExistence type="inferred from homology"/>
<evidence type="ECO:0000250" key="1"/>
<evidence type="ECO:0000256" key="2">
    <source>
        <dbReference type="SAM" id="MobiDB-lite"/>
    </source>
</evidence>
<evidence type="ECO:0000305" key="3"/>